<reference key="1">
    <citation type="journal article" date="2000" name="Nature">
        <title>The genome sequence of the food-borne pathogen Campylobacter jejuni reveals hypervariable sequences.</title>
        <authorList>
            <person name="Parkhill J."/>
            <person name="Wren B.W."/>
            <person name="Mungall K.L."/>
            <person name="Ketley J.M."/>
            <person name="Churcher C.M."/>
            <person name="Basham D."/>
            <person name="Chillingworth T."/>
            <person name="Davies R.M."/>
            <person name="Feltwell T."/>
            <person name="Holroyd S."/>
            <person name="Jagels K."/>
            <person name="Karlyshev A.V."/>
            <person name="Moule S."/>
            <person name="Pallen M.J."/>
            <person name="Penn C.W."/>
            <person name="Quail M.A."/>
            <person name="Rajandream M.A."/>
            <person name="Rutherford K.M."/>
            <person name="van Vliet A.H.M."/>
            <person name="Whitehead S."/>
            <person name="Barrell B.G."/>
        </authorList>
    </citation>
    <scope>NUCLEOTIDE SEQUENCE [LARGE SCALE GENOMIC DNA]</scope>
    <source>
        <strain>ATCC 700819 / NCTC 11168</strain>
    </source>
</reference>
<evidence type="ECO:0000255" key="1">
    <source>
        <dbReference type="HAMAP-Rule" id="MF_00236"/>
    </source>
</evidence>
<evidence type="ECO:0000256" key="2">
    <source>
        <dbReference type="SAM" id="MobiDB-lite"/>
    </source>
</evidence>
<accession>Q9PNB9</accession>
<accession>Q0P980</accession>
<feature type="chain" id="PRO_0000097932" description="Sec-independent protein translocase protein TatA">
    <location>
        <begin position="1"/>
        <end position="79"/>
    </location>
</feature>
<feature type="transmembrane region" description="Helical" evidence="1">
    <location>
        <begin position="1"/>
        <end position="21"/>
    </location>
</feature>
<feature type="region of interest" description="Disordered" evidence="2">
    <location>
        <begin position="49"/>
        <end position="79"/>
    </location>
</feature>
<feature type="compositionally biased region" description="Basic and acidic residues" evidence="2">
    <location>
        <begin position="49"/>
        <end position="61"/>
    </location>
</feature>
<protein>
    <recommendedName>
        <fullName evidence="1">Sec-independent protein translocase protein TatA</fullName>
    </recommendedName>
</protein>
<dbReference type="EMBL" id="AL111168">
    <property type="protein sequence ID" value="CAL35291.1"/>
    <property type="molecule type" value="Genomic_DNA"/>
</dbReference>
<dbReference type="PIR" id="B81323">
    <property type="entry name" value="B81323"/>
</dbReference>
<dbReference type="RefSeq" id="WP_002852866.1">
    <property type="nucleotide sequence ID" value="NZ_SZUC01000001.1"/>
</dbReference>
<dbReference type="RefSeq" id="YP_002344567.1">
    <property type="nucleotide sequence ID" value="NC_002163.1"/>
</dbReference>
<dbReference type="SMR" id="Q9PNB9"/>
<dbReference type="STRING" id="192222.Cj1176c"/>
<dbReference type="PaxDb" id="192222-Cj1176c"/>
<dbReference type="EnsemblBacteria" id="CAL35291">
    <property type="protein sequence ID" value="CAL35291"/>
    <property type="gene ID" value="Cj1176c"/>
</dbReference>
<dbReference type="GeneID" id="905466"/>
<dbReference type="KEGG" id="cje:Cj1176c"/>
<dbReference type="PATRIC" id="fig|192222.6.peg.1157"/>
<dbReference type="eggNOG" id="COG1826">
    <property type="taxonomic scope" value="Bacteria"/>
</dbReference>
<dbReference type="HOGENOM" id="CLU_086034_5_4_7"/>
<dbReference type="OrthoDB" id="9813726at2"/>
<dbReference type="Proteomes" id="UP000000799">
    <property type="component" value="Chromosome"/>
</dbReference>
<dbReference type="GO" id="GO:0033281">
    <property type="term" value="C:TAT protein transport complex"/>
    <property type="evidence" value="ECO:0007669"/>
    <property type="project" value="UniProtKB-UniRule"/>
</dbReference>
<dbReference type="GO" id="GO:0008320">
    <property type="term" value="F:protein transmembrane transporter activity"/>
    <property type="evidence" value="ECO:0007669"/>
    <property type="project" value="UniProtKB-UniRule"/>
</dbReference>
<dbReference type="GO" id="GO:0043953">
    <property type="term" value="P:protein transport by the Tat complex"/>
    <property type="evidence" value="ECO:0007669"/>
    <property type="project" value="UniProtKB-UniRule"/>
</dbReference>
<dbReference type="Gene3D" id="1.20.5.3310">
    <property type="match status" value="1"/>
</dbReference>
<dbReference type="HAMAP" id="MF_00236">
    <property type="entry name" value="TatA_E"/>
    <property type="match status" value="1"/>
</dbReference>
<dbReference type="InterPro" id="IPR003369">
    <property type="entry name" value="TatA/B/E"/>
</dbReference>
<dbReference type="InterPro" id="IPR006312">
    <property type="entry name" value="TatA/E"/>
</dbReference>
<dbReference type="NCBIfam" id="TIGR01411">
    <property type="entry name" value="tatAE"/>
    <property type="match status" value="1"/>
</dbReference>
<dbReference type="PANTHER" id="PTHR42982">
    <property type="entry name" value="SEC-INDEPENDENT PROTEIN TRANSLOCASE PROTEIN TATA"/>
    <property type="match status" value="1"/>
</dbReference>
<dbReference type="PANTHER" id="PTHR42982:SF1">
    <property type="entry name" value="SEC-INDEPENDENT PROTEIN TRANSLOCASE PROTEIN TATA"/>
    <property type="match status" value="1"/>
</dbReference>
<dbReference type="Pfam" id="PF02416">
    <property type="entry name" value="TatA_B_E"/>
    <property type="match status" value="1"/>
</dbReference>
<proteinExistence type="inferred from homology"/>
<name>TATA_CAMJE</name>
<keyword id="KW-0997">Cell inner membrane</keyword>
<keyword id="KW-1003">Cell membrane</keyword>
<keyword id="KW-0472">Membrane</keyword>
<keyword id="KW-0653">Protein transport</keyword>
<keyword id="KW-1185">Reference proteome</keyword>
<keyword id="KW-0811">Translocation</keyword>
<keyword id="KW-0812">Transmembrane</keyword>
<keyword id="KW-1133">Transmembrane helix</keyword>
<keyword id="KW-0813">Transport</keyword>
<comment type="function">
    <text evidence="1">Part of the twin-arginine translocation (Tat) system that transports large folded proteins containing a characteristic twin-arginine motif in their signal peptide across membranes. TatA could form the protein-conducting channel of the Tat system.</text>
</comment>
<comment type="subunit">
    <text evidence="1">The Tat system comprises two distinct complexes: a TatABC complex, containing multiple copies of TatA, TatB and TatC subunits, and a separate TatA complex, containing only TatA subunits. Substrates initially bind to the TatABC complex, which probably triggers association of the separate TatA complex to form the active translocon.</text>
</comment>
<comment type="subcellular location">
    <subcellularLocation>
        <location evidence="1">Cell inner membrane</location>
        <topology evidence="1">Single-pass membrane protein</topology>
    </subcellularLocation>
</comment>
<comment type="similarity">
    <text evidence="1">Belongs to the TatA/E family.</text>
</comment>
<gene>
    <name evidence="1" type="primary">tatA</name>
    <name type="ordered locus">Cj1176c</name>
</gene>
<sequence length="79" mass="8685">MGGWSSPSHWLIILLIVVLLFGAKKIPELAKGLGKGIKTFKDEMNNDDEVAKNTQKIEENKNTTNNTNADASIDETKKA</sequence>
<organism>
    <name type="scientific">Campylobacter jejuni subsp. jejuni serotype O:2 (strain ATCC 700819 / NCTC 11168)</name>
    <dbReference type="NCBI Taxonomy" id="192222"/>
    <lineage>
        <taxon>Bacteria</taxon>
        <taxon>Pseudomonadati</taxon>
        <taxon>Campylobacterota</taxon>
        <taxon>Epsilonproteobacteria</taxon>
        <taxon>Campylobacterales</taxon>
        <taxon>Campylobacteraceae</taxon>
        <taxon>Campylobacter</taxon>
    </lineage>
</organism>